<feature type="chain" id="PRO_1000047692" description="Aminomethyltransferase">
    <location>
        <begin position="1"/>
        <end position="359"/>
    </location>
</feature>
<sequence>MPNKTVLHSKHLESGAKMVDFHGWEMPINYGSQIEEHHAVRRTAGMFDVSHMTIVDVVGEQAQDYLRHLLANDVAKLKERGKALYSGMLNEEGGVVDDLIVYHFETTNYRLVVNSATRQKDMDWLNAQAEGFDVTITERPEFAMIAVQGPQAKEKAATLFSSAQNEAVAGMKPFFGVQAEDLFIATTGYTGEAGYEIMVPNEQAADFWQKLLDAGVAPCGLGARDTLRLEAGMNLYGQDMDETISPLAANMGWTITWEPAERNFVGRKALEAQKAAGTDKLVGLVLTEKGVLRHGQAVQVEGGEGIITSGTFSPTLGHSIAMARVPASVGDTAQVEMRKKWVTVNVVKPSFVRNGKSVL</sequence>
<protein>
    <recommendedName>
        <fullName evidence="1">Aminomethyltransferase</fullName>
        <ecNumber evidence="1">2.1.2.10</ecNumber>
    </recommendedName>
    <alternativeName>
        <fullName evidence="1">Glycine cleavage system T protein</fullName>
    </alternativeName>
</protein>
<organism>
    <name type="scientific">Pseudoalteromonas atlantica (strain T6c / ATCC BAA-1087)</name>
    <dbReference type="NCBI Taxonomy" id="3042615"/>
    <lineage>
        <taxon>Bacteria</taxon>
        <taxon>Pseudomonadati</taxon>
        <taxon>Pseudomonadota</taxon>
        <taxon>Gammaproteobacteria</taxon>
        <taxon>Alteromonadales</taxon>
        <taxon>Alteromonadaceae</taxon>
        <taxon>Paraglaciecola</taxon>
    </lineage>
</organism>
<name>GCST_PSEA6</name>
<gene>
    <name evidence="1" type="primary">gcvT</name>
    <name type="ordered locus">Patl_3592</name>
</gene>
<reference key="1">
    <citation type="submission" date="2006-06" db="EMBL/GenBank/DDBJ databases">
        <title>Complete sequence of Pseudoalteromonas atlantica T6c.</title>
        <authorList>
            <consortium name="US DOE Joint Genome Institute"/>
            <person name="Copeland A."/>
            <person name="Lucas S."/>
            <person name="Lapidus A."/>
            <person name="Barry K."/>
            <person name="Detter J.C."/>
            <person name="Glavina del Rio T."/>
            <person name="Hammon N."/>
            <person name="Israni S."/>
            <person name="Dalin E."/>
            <person name="Tice H."/>
            <person name="Pitluck S."/>
            <person name="Saunders E."/>
            <person name="Brettin T."/>
            <person name="Bruce D."/>
            <person name="Han C."/>
            <person name="Tapia R."/>
            <person name="Gilna P."/>
            <person name="Schmutz J."/>
            <person name="Larimer F."/>
            <person name="Land M."/>
            <person name="Hauser L."/>
            <person name="Kyrpides N."/>
            <person name="Kim E."/>
            <person name="Karls A.C."/>
            <person name="Bartlett D."/>
            <person name="Higgins B.P."/>
            <person name="Richardson P."/>
        </authorList>
    </citation>
    <scope>NUCLEOTIDE SEQUENCE [LARGE SCALE GENOMIC DNA]</scope>
    <source>
        <strain>T6c / ATCC BAA-1087</strain>
    </source>
</reference>
<evidence type="ECO:0000255" key="1">
    <source>
        <dbReference type="HAMAP-Rule" id="MF_00259"/>
    </source>
</evidence>
<dbReference type="EC" id="2.1.2.10" evidence="1"/>
<dbReference type="EMBL" id="CP000388">
    <property type="protein sequence ID" value="ABG42094.1"/>
    <property type="molecule type" value="Genomic_DNA"/>
</dbReference>
<dbReference type="RefSeq" id="WP_011576319.1">
    <property type="nucleotide sequence ID" value="NC_008228.1"/>
</dbReference>
<dbReference type="SMR" id="Q15PU4"/>
<dbReference type="STRING" id="342610.Patl_3592"/>
<dbReference type="KEGG" id="pat:Patl_3592"/>
<dbReference type="eggNOG" id="COG0404">
    <property type="taxonomic scope" value="Bacteria"/>
</dbReference>
<dbReference type="HOGENOM" id="CLU_007884_10_2_6"/>
<dbReference type="OrthoDB" id="9774591at2"/>
<dbReference type="Proteomes" id="UP000001981">
    <property type="component" value="Chromosome"/>
</dbReference>
<dbReference type="GO" id="GO:0005829">
    <property type="term" value="C:cytosol"/>
    <property type="evidence" value="ECO:0007669"/>
    <property type="project" value="TreeGrafter"/>
</dbReference>
<dbReference type="GO" id="GO:0005960">
    <property type="term" value="C:glycine cleavage complex"/>
    <property type="evidence" value="ECO:0007669"/>
    <property type="project" value="InterPro"/>
</dbReference>
<dbReference type="GO" id="GO:0004047">
    <property type="term" value="F:aminomethyltransferase activity"/>
    <property type="evidence" value="ECO:0007669"/>
    <property type="project" value="UniProtKB-UniRule"/>
</dbReference>
<dbReference type="GO" id="GO:0008483">
    <property type="term" value="F:transaminase activity"/>
    <property type="evidence" value="ECO:0007669"/>
    <property type="project" value="UniProtKB-KW"/>
</dbReference>
<dbReference type="GO" id="GO:0019464">
    <property type="term" value="P:glycine decarboxylation via glycine cleavage system"/>
    <property type="evidence" value="ECO:0007669"/>
    <property type="project" value="UniProtKB-UniRule"/>
</dbReference>
<dbReference type="FunFam" id="2.40.30.110:FF:000001">
    <property type="entry name" value="Aminomethyltransferase"/>
    <property type="match status" value="1"/>
</dbReference>
<dbReference type="FunFam" id="3.30.70.1400:FF:000001">
    <property type="entry name" value="Aminomethyltransferase"/>
    <property type="match status" value="1"/>
</dbReference>
<dbReference type="FunFam" id="4.10.1250.10:FF:000001">
    <property type="entry name" value="Aminomethyltransferase"/>
    <property type="match status" value="1"/>
</dbReference>
<dbReference type="Gene3D" id="2.40.30.110">
    <property type="entry name" value="Aminomethyltransferase beta-barrel domains"/>
    <property type="match status" value="1"/>
</dbReference>
<dbReference type="Gene3D" id="3.30.70.1400">
    <property type="entry name" value="Aminomethyltransferase beta-barrel domains"/>
    <property type="match status" value="1"/>
</dbReference>
<dbReference type="Gene3D" id="4.10.1250.10">
    <property type="entry name" value="Aminomethyltransferase fragment"/>
    <property type="match status" value="1"/>
</dbReference>
<dbReference type="Gene3D" id="3.30.1360.120">
    <property type="entry name" value="Probable tRNA modification gtpase trme, domain 1"/>
    <property type="match status" value="1"/>
</dbReference>
<dbReference type="HAMAP" id="MF_00259">
    <property type="entry name" value="GcvT"/>
    <property type="match status" value="1"/>
</dbReference>
<dbReference type="InterPro" id="IPR006223">
    <property type="entry name" value="GCS_T"/>
</dbReference>
<dbReference type="InterPro" id="IPR022903">
    <property type="entry name" value="GCS_T_bac"/>
</dbReference>
<dbReference type="InterPro" id="IPR013977">
    <property type="entry name" value="GCST_C"/>
</dbReference>
<dbReference type="InterPro" id="IPR006222">
    <property type="entry name" value="GCV_T_N"/>
</dbReference>
<dbReference type="InterPro" id="IPR028896">
    <property type="entry name" value="GcvT/YgfZ/DmdA"/>
</dbReference>
<dbReference type="InterPro" id="IPR029043">
    <property type="entry name" value="GcvT/YgfZ_C"/>
</dbReference>
<dbReference type="InterPro" id="IPR027266">
    <property type="entry name" value="TrmE/GcvT_dom1"/>
</dbReference>
<dbReference type="NCBIfam" id="TIGR00528">
    <property type="entry name" value="gcvT"/>
    <property type="match status" value="1"/>
</dbReference>
<dbReference type="NCBIfam" id="NF001567">
    <property type="entry name" value="PRK00389.1"/>
    <property type="match status" value="1"/>
</dbReference>
<dbReference type="PANTHER" id="PTHR43757">
    <property type="entry name" value="AMINOMETHYLTRANSFERASE"/>
    <property type="match status" value="1"/>
</dbReference>
<dbReference type="PANTHER" id="PTHR43757:SF2">
    <property type="entry name" value="AMINOMETHYLTRANSFERASE, MITOCHONDRIAL"/>
    <property type="match status" value="1"/>
</dbReference>
<dbReference type="Pfam" id="PF01571">
    <property type="entry name" value="GCV_T"/>
    <property type="match status" value="1"/>
</dbReference>
<dbReference type="Pfam" id="PF08669">
    <property type="entry name" value="GCV_T_C"/>
    <property type="match status" value="1"/>
</dbReference>
<dbReference type="PIRSF" id="PIRSF006487">
    <property type="entry name" value="GcvT"/>
    <property type="match status" value="1"/>
</dbReference>
<dbReference type="SUPFAM" id="SSF101790">
    <property type="entry name" value="Aminomethyltransferase beta-barrel domain"/>
    <property type="match status" value="1"/>
</dbReference>
<dbReference type="SUPFAM" id="SSF103025">
    <property type="entry name" value="Folate-binding domain"/>
    <property type="match status" value="1"/>
</dbReference>
<accession>Q15PU4</accession>
<proteinExistence type="inferred from homology"/>
<keyword id="KW-0032">Aminotransferase</keyword>
<keyword id="KW-0808">Transferase</keyword>
<comment type="function">
    <text evidence="1">The glycine cleavage system catalyzes the degradation of glycine.</text>
</comment>
<comment type="catalytic activity">
    <reaction evidence="1">
        <text>N(6)-[(R)-S(8)-aminomethyldihydrolipoyl]-L-lysyl-[protein] + (6S)-5,6,7,8-tetrahydrofolate = N(6)-[(R)-dihydrolipoyl]-L-lysyl-[protein] + (6R)-5,10-methylene-5,6,7,8-tetrahydrofolate + NH4(+)</text>
        <dbReference type="Rhea" id="RHEA:16945"/>
        <dbReference type="Rhea" id="RHEA-COMP:10475"/>
        <dbReference type="Rhea" id="RHEA-COMP:10492"/>
        <dbReference type="ChEBI" id="CHEBI:15636"/>
        <dbReference type="ChEBI" id="CHEBI:28938"/>
        <dbReference type="ChEBI" id="CHEBI:57453"/>
        <dbReference type="ChEBI" id="CHEBI:83100"/>
        <dbReference type="ChEBI" id="CHEBI:83143"/>
        <dbReference type="EC" id="2.1.2.10"/>
    </reaction>
</comment>
<comment type="subunit">
    <text evidence="1">The glycine cleavage system is composed of four proteins: P, T, L and H.</text>
</comment>
<comment type="similarity">
    <text evidence="1">Belongs to the GcvT family.</text>
</comment>